<proteinExistence type="inferred from homology"/>
<feature type="transit peptide" description="Mitochondrion" evidence="2">
    <location>
        <begin position="1"/>
        <end position="140"/>
    </location>
</feature>
<feature type="chain" id="PRO_0000035663" description="Acetolactate synthase, mitochondrial">
    <location>
        <begin position="141"/>
        <end position="669"/>
    </location>
</feature>
<feature type="region of interest" description="Thiamine pyrophosphate binding">
    <location>
        <begin position="497"/>
        <end position="577"/>
    </location>
</feature>
<feature type="binding site" evidence="1">
    <location>
        <position position="134"/>
    </location>
    <ligand>
        <name>thiamine diphosphate</name>
        <dbReference type="ChEBI" id="CHEBI:58937"/>
    </ligand>
</feature>
<feature type="binding site" evidence="1">
    <location>
        <position position="236"/>
    </location>
    <ligand>
        <name>FAD</name>
        <dbReference type="ChEBI" id="CHEBI:57692"/>
    </ligand>
</feature>
<feature type="binding site" evidence="1">
    <location>
        <begin position="351"/>
        <end position="372"/>
    </location>
    <ligand>
        <name>FAD</name>
        <dbReference type="ChEBI" id="CHEBI:57692"/>
    </ligand>
</feature>
<feature type="binding site" evidence="1">
    <location>
        <begin position="403"/>
        <end position="422"/>
    </location>
    <ligand>
        <name>FAD</name>
        <dbReference type="ChEBI" id="CHEBI:57692"/>
    </ligand>
</feature>
<feature type="binding site" evidence="1">
    <location>
        <position position="548"/>
    </location>
    <ligand>
        <name>Mg(2+)</name>
        <dbReference type="ChEBI" id="CHEBI:18420"/>
    </ligand>
</feature>
<feature type="binding site" evidence="1">
    <location>
        <position position="575"/>
    </location>
    <ligand>
        <name>Mg(2+)</name>
        <dbReference type="ChEBI" id="CHEBI:18420"/>
    </ligand>
</feature>
<feature type="sequence conflict" description="In Ref. 1; AAA35315." evidence="3" ref="1">
    <original>A</original>
    <variation>V</variation>
    <location>
        <position position="5"/>
    </location>
</feature>
<feature type="sequence conflict" description="In Ref. 1; AAA35315." evidence="3" ref="1">
    <original>H</original>
    <variation>D</variation>
    <location>
        <position position="11"/>
    </location>
</feature>
<feature type="sequence conflict" description="In Ref. 1; AAA35315." evidence="3" ref="1">
    <original>A</original>
    <variation>G</variation>
    <location>
        <position position="289"/>
    </location>
</feature>
<protein>
    <recommendedName>
        <fullName>Acetolactate synthase, mitochondrial</fullName>
        <ecNumber>2.2.1.6</ecNumber>
    </recommendedName>
    <alternativeName>
        <fullName>AHAS</fullName>
    </alternativeName>
    <alternativeName>
        <fullName>ALS</fullName>
    </alternativeName>
    <alternativeName>
        <fullName>Acetohydroxy-acid synthase</fullName>
    </alternativeName>
</protein>
<accession>P36620</accession>
<accession>Q9P796</accession>
<sequence>MTVLAPLRRLHTRAAFSSYGREIALQKRFLNLNSCSAVRRYGTGFSNNLRIKKLKNAFGVVRANSTKSTSTVTTASPIKYDSSFVGKTGGEIFHDMMLKHNVKHVFGYPGGAILPVFDAIYRSPHFEFILPRHEQAAGHAAQAYSRVTKKPGVVLVTSGPGATNVITPIADALADGTPLVVFSGQVATSAIGSDAFQEADMVGISRSCTKWNVMVKDVADLPRRIDEAFEIATSGRPGPVLVDLPKDVTASVLKEPIPILSSVPSMNRRMKEVLEEGSKNVTAKIDRVANLLKLAKKPVIFCGHGVLANPECPTLLRKFSERLQIPVTTSLLGLGAVDERSDLSLHMLGMHGSGYANMAMQEADLILALGVRFDDRVTGNVSLFAPQARLAAAEERGGIIHFDISPKNIGKVVQPTEAIEGDVYESLKLLDSATKNIKIPSRFDWLSQIQTWKERFPFTFTRSAPGELVKPQEVIQELDKQTSDIKDKVTITTGVGAHQMWAATFYRWTKPSSLVTSGGLGTMGFGLPAAIGASVAAPKDIVIDIDGDASFSMTGMELATVRQFDIPVKILILNNEEQGMVTQWQNLFYEKRYSHTHQKNPNFVKLADAMGIKALRVEKREDLAKKMKEFLSTKGPVLMEVLVAQKEHVYPFVPGGKALHQFILHESLS</sequence>
<keyword id="KW-0028">Amino-acid biosynthesis</keyword>
<keyword id="KW-0100">Branched-chain amino acid biosynthesis</keyword>
<keyword id="KW-0274">FAD</keyword>
<keyword id="KW-0285">Flavoprotein</keyword>
<keyword id="KW-0460">Magnesium</keyword>
<keyword id="KW-0479">Metal-binding</keyword>
<keyword id="KW-0496">Mitochondrion</keyword>
<keyword id="KW-1185">Reference proteome</keyword>
<keyword id="KW-0786">Thiamine pyrophosphate</keyword>
<keyword id="KW-0808">Transferase</keyword>
<keyword id="KW-0809">Transit peptide</keyword>
<reference key="1">
    <citation type="journal article" date="1993" name="Curr. Genet.">
        <title>Isolation and structure of an acetolactate synthase gene from Schizosaccharomyces pombe and complementation of the ilv2 mutation in Saccharomyces cerevisiae.</title>
        <authorList>
            <person name="Bekkaoui F."/>
            <person name="Nadin-Davis S.A."/>
            <person name="Crosby W.L."/>
        </authorList>
    </citation>
    <scope>NUCLEOTIDE SEQUENCE [GENOMIC DNA]</scope>
    <source>
        <strain>972 / ATCC 24843</strain>
    </source>
</reference>
<reference key="2">
    <citation type="journal article" date="2002" name="Nature">
        <title>The genome sequence of Schizosaccharomyces pombe.</title>
        <authorList>
            <person name="Wood V."/>
            <person name="Gwilliam R."/>
            <person name="Rajandream M.A."/>
            <person name="Lyne M.H."/>
            <person name="Lyne R."/>
            <person name="Stewart A."/>
            <person name="Sgouros J.G."/>
            <person name="Peat N."/>
            <person name="Hayles J."/>
            <person name="Baker S.G."/>
            <person name="Basham D."/>
            <person name="Bowman S."/>
            <person name="Brooks K."/>
            <person name="Brown D."/>
            <person name="Brown S."/>
            <person name="Chillingworth T."/>
            <person name="Churcher C.M."/>
            <person name="Collins M."/>
            <person name="Connor R."/>
            <person name="Cronin A."/>
            <person name="Davis P."/>
            <person name="Feltwell T."/>
            <person name="Fraser A."/>
            <person name="Gentles S."/>
            <person name="Goble A."/>
            <person name="Hamlin N."/>
            <person name="Harris D.E."/>
            <person name="Hidalgo J."/>
            <person name="Hodgson G."/>
            <person name="Holroyd S."/>
            <person name="Hornsby T."/>
            <person name="Howarth S."/>
            <person name="Huckle E.J."/>
            <person name="Hunt S."/>
            <person name="Jagels K."/>
            <person name="James K.D."/>
            <person name="Jones L."/>
            <person name="Jones M."/>
            <person name="Leather S."/>
            <person name="McDonald S."/>
            <person name="McLean J."/>
            <person name="Mooney P."/>
            <person name="Moule S."/>
            <person name="Mungall K.L."/>
            <person name="Murphy L.D."/>
            <person name="Niblett D."/>
            <person name="Odell C."/>
            <person name="Oliver K."/>
            <person name="O'Neil S."/>
            <person name="Pearson D."/>
            <person name="Quail M.A."/>
            <person name="Rabbinowitsch E."/>
            <person name="Rutherford K.M."/>
            <person name="Rutter S."/>
            <person name="Saunders D."/>
            <person name="Seeger K."/>
            <person name="Sharp S."/>
            <person name="Skelton J."/>
            <person name="Simmonds M.N."/>
            <person name="Squares R."/>
            <person name="Squares S."/>
            <person name="Stevens K."/>
            <person name="Taylor K."/>
            <person name="Taylor R.G."/>
            <person name="Tivey A."/>
            <person name="Walsh S.V."/>
            <person name="Warren T."/>
            <person name="Whitehead S."/>
            <person name="Woodward J.R."/>
            <person name="Volckaert G."/>
            <person name="Aert R."/>
            <person name="Robben J."/>
            <person name="Grymonprez B."/>
            <person name="Weltjens I."/>
            <person name="Vanstreels E."/>
            <person name="Rieger M."/>
            <person name="Schaefer M."/>
            <person name="Mueller-Auer S."/>
            <person name="Gabel C."/>
            <person name="Fuchs M."/>
            <person name="Duesterhoeft A."/>
            <person name="Fritzc C."/>
            <person name="Holzer E."/>
            <person name="Moestl D."/>
            <person name="Hilbert H."/>
            <person name="Borzym K."/>
            <person name="Langer I."/>
            <person name="Beck A."/>
            <person name="Lehrach H."/>
            <person name="Reinhardt R."/>
            <person name="Pohl T.M."/>
            <person name="Eger P."/>
            <person name="Zimmermann W."/>
            <person name="Wedler H."/>
            <person name="Wambutt R."/>
            <person name="Purnelle B."/>
            <person name="Goffeau A."/>
            <person name="Cadieu E."/>
            <person name="Dreano S."/>
            <person name="Gloux S."/>
            <person name="Lelaure V."/>
            <person name="Mottier S."/>
            <person name="Galibert F."/>
            <person name="Aves S.J."/>
            <person name="Xiang Z."/>
            <person name="Hunt C."/>
            <person name="Moore K."/>
            <person name="Hurst S.M."/>
            <person name="Lucas M."/>
            <person name="Rochet M."/>
            <person name="Gaillardin C."/>
            <person name="Tallada V.A."/>
            <person name="Garzon A."/>
            <person name="Thode G."/>
            <person name="Daga R.R."/>
            <person name="Cruzado L."/>
            <person name="Jimenez J."/>
            <person name="Sanchez M."/>
            <person name="del Rey F."/>
            <person name="Benito J."/>
            <person name="Dominguez A."/>
            <person name="Revuelta J.L."/>
            <person name="Moreno S."/>
            <person name="Armstrong J."/>
            <person name="Forsburg S.L."/>
            <person name="Cerutti L."/>
            <person name="Lowe T."/>
            <person name="McCombie W.R."/>
            <person name="Paulsen I."/>
            <person name="Potashkin J."/>
            <person name="Shpakovski G.V."/>
            <person name="Ussery D."/>
            <person name="Barrell B.G."/>
            <person name="Nurse P."/>
        </authorList>
    </citation>
    <scope>NUCLEOTIDE SEQUENCE [LARGE SCALE GENOMIC DNA]</scope>
    <source>
        <strain>972 / ATCC 24843</strain>
    </source>
</reference>
<organism>
    <name type="scientific">Schizosaccharomyces pombe (strain 972 / ATCC 24843)</name>
    <name type="common">Fission yeast</name>
    <dbReference type="NCBI Taxonomy" id="284812"/>
    <lineage>
        <taxon>Eukaryota</taxon>
        <taxon>Fungi</taxon>
        <taxon>Dikarya</taxon>
        <taxon>Ascomycota</taxon>
        <taxon>Taphrinomycotina</taxon>
        <taxon>Schizosaccharomycetes</taxon>
        <taxon>Schizosaccharomycetales</taxon>
        <taxon>Schizosaccharomycetaceae</taxon>
        <taxon>Schizosaccharomyces</taxon>
    </lineage>
</organism>
<dbReference type="EC" id="2.2.1.6"/>
<dbReference type="EMBL" id="L11293">
    <property type="protein sequence ID" value="AAA35315.1"/>
    <property type="molecule type" value="Genomic_DNA"/>
</dbReference>
<dbReference type="EMBL" id="CU329671">
    <property type="protein sequence ID" value="CAB87369.1"/>
    <property type="molecule type" value="Genomic_DNA"/>
</dbReference>
<dbReference type="PIR" id="S39111">
    <property type="entry name" value="S39111"/>
</dbReference>
<dbReference type="RefSeq" id="NP_595382.1">
    <property type="nucleotide sequence ID" value="NM_001021289.2"/>
</dbReference>
<dbReference type="SMR" id="P36620"/>
<dbReference type="BioGRID" id="277856">
    <property type="interactions" value="59"/>
</dbReference>
<dbReference type="FunCoup" id="P36620">
    <property type="interactions" value="163"/>
</dbReference>
<dbReference type="STRING" id="284812.P36620"/>
<dbReference type="iPTMnet" id="P36620"/>
<dbReference type="PaxDb" id="4896-SPBP35G2.07.1"/>
<dbReference type="EnsemblFungi" id="SPBP35G2.07.1">
    <property type="protein sequence ID" value="SPBP35G2.07.1:pep"/>
    <property type="gene ID" value="SPBP35G2.07"/>
</dbReference>
<dbReference type="GeneID" id="2541345"/>
<dbReference type="KEGG" id="spo:2541345"/>
<dbReference type="PomBase" id="SPBP35G2.07">
    <property type="gene designation" value="ilv1"/>
</dbReference>
<dbReference type="VEuPathDB" id="FungiDB:SPBP35G2.07"/>
<dbReference type="eggNOG" id="KOG4166">
    <property type="taxonomic scope" value="Eukaryota"/>
</dbReference>
<dbReference type="HOGENOM" id="CLU_013748_1_2_1"/>
<dbReference type="InParanoid" id="P36620"/>
<dbReference type="OMA" id="QETDMIG"/>
<dbReference type="PhylomeDB" id="P36620"/>
<dbReference type="UniPathway" id="UPA00047">
    <property type="reaction ID" value="UER00055"/>
</dbReference>
<dbReference type="UniPathway" id="UPA00049">
    <property type="reaction ID" value="UER00059"/>
</dbReference>
<dbReference type="PRO" id="PR:P36620"/>
<dbReference type="Proteomes" id="UP000002485">
    <property type="component" value="Chromosome II"/>
</dbReference>
<dbReference type="GO" id="GO:0005948">
    <property type="term" value="C:acetolactate synthase complex"/>
    <property type="evidence" value="ECO:0000318"/>
    <property type="project" value="GO_Central"/>
</dbReference>
<dbReference type="GO" id="GO:0005759">
    <property type="term" value="C:mitochondrial matrix"/>
    <property type="evidence" value="ECO:0000305"/>
    <property type="project" value="PomBase"/>
</dbReference>
<dbReference type="GO" id="GO:0005739">
    <property type="term" value="C:mitochondrion"/>
    <property type="evidence" value="ECO:0007005"/>
    <property type="project" value="PomBase"/>
</dbReference>
<dbReference type="GO" id="GO:0003984">
    <property type="term" value="F:acetolactate synthase activity"/>
    <property type="evidence" value="ECO:0000314"/>
    <property type="project" value="PomBase"/>
</dbReference>
<dbReference type="GO" id="GO:0050660">
    <property type="term" value="F:flavin adenine dinucleotide binding"/>
    <property type="evidence" value="ECO:0000318"/>
    <property type="project" value="GO_Central"/>
</dbReference>
<dbReference type="GO" id="GO:0000287">
    <property type="term" value="F:magnesium ion binding"/>
    <property type="evidence" value="ECO:0007669"/>
    <property type="project" value="InterPro"/>
</dbReference>
<dbReference type="GO" id="GO:0030976">
    <property type="term" value="F:thiamine pyrophosphate binding"/>
    <property type="evidence" value="ECO:0007669"/>
    <property type="project" value="InterPro"/>
</dbReference>
<dbReference type="GO" id="GO:0009097">
    <property type="term" value="P:isoleucine biosynthetic process"/>
    <property type="evidence" value="ECO:0000269"/>
    <property type="project" value="PomBase"/>
</dbReference>
<dbReference type="GO" id="GO:1901705">
    <property type="term" value="P:L-isoleucine biosynthetic process"/>
    <property type="evidence" value="ECO:0000316"/>
    <property type="project" value="PomBase"/>
</dbReference>
<dbReference type="GO" id="GO:0009099">
    <property type="term" value="P:L-valine biosynthetic process"/>
    <property type="evidence" value="ECO:0000314"/>
    <property type="project" value="PomBase"/>
</dbReference>
<dbReference type="CDD" id="cd02015">
    <property type="entry name" value="TPP_AHAS"/>
    <property type="match status" value="1"/>
</dbReference>
<dbReference type="CDD" id="cd07035">
    <property type="entry name" value="TPP_PYR_POX_like"/>
    <property type="match status" value="1"/>
</dbReference>
<dbReference type="FunFam" id="3.40.50.1220:FF:000008">
    <property type="entry name" value="Acetolactate synthase"/>
    <property type="match status" value="1"/>
</dbReference>
<dbReference type="FunFam" id="3.40.50.970:FF:000007">
    <property type="entry name" value="Acetolactate synthase"/>
    <property type="match status" value="1"/>
</dbReference>
<dbReference type="FunFam" id="3.40.50.970:FF:000053">
    <property type="entry name" value="Acetolactate synthase, mitochondrial"/>
    <property type="match status" value="1"/>
</dbReference>
<dbReference type="Gene3D" id="3.40.50.970">
    <property type="match status" value="2"/>
</dbReference>
<dbReference type="Gene3D" id="3.40.50.1220">
    <property type="entry name" value="TPP-binding domain"/>
    <property type="match status" value="1"/>
</dbReference>
<dbReference type="InterPro" id="IPR012846">
    <property type="entry name" value="Acetolactate_synth_lsu"/>
</dbReference>
<dbReference type="InterPro" id="IPR039368">
    <property type="entry name" value="AHAS_TPP"/>
</dbReference>
<dbReference type="InterPro" id="IPR029035">
    <property type="entry name" value="DHS-like_NAD/FAD-binding_dom"/>
</dbReference>
<dbReference type="InterPro" id="IPR029061">
    <property type="entry name" value="THDP-binding"/>
</dbReference>
<dbReference type="InterPro" id="IPR012000">
    <property type="entry name" value="Thiamin_PyroP_enz_cen_dom"/>
</dbReference>
<dbReference type="InterPro" id="IPR012001">
    <property type="entry name" value="Thiamin_PyroP_enz_TPP-bd_dom"/>
</dbReference>
<dbReference type="InterPro" id="IPR000399">
    <property type="entry name" value="TPP-bd_CS"/>
</dbReference>
<dbReference type="InterPro" id="IPR045229">
    <property type="entry name" value="TPP_enz"/>
</dbReference>
<dbReference type="InterPro" id="IPR011766">
    <property type="entry name" value="TPP_enzyme_TPP-bd"/>
</dbReference>
<dbReference type="NCBIfam" id="TIGR00118">
    <property type="entry name" value="acolac_lg"/>
    <property type="match status" value="1"/>
</dbReference>
<dbReference type="PANTHER" id="PTHR18968:SF13">
    <property type="entry name" value="ACETOLACTATE SYNTHASE CATALYTIC SUBUNIT, MITOCHONDRIAL"/>
    <property type="match status" value="1"/>
</dbReference>
<dbReference type="PANTHER" id="PTHR18968">
    <property type="entry name" value="THIAMINE PYROPHOSPHATE ENZYMES"/>
    <property type="match status" value="1"/>
</dbReference>
<dbReference type="Pfam" id="PF02775">
    <property type="entry name" value="TPP_enzyme_C"/>
    <property type="match status" value="1"/>
</dbReference>
<dbReference type="Pfam" id="PF00205">
    <property type="entry name" value="TPP_enzyme_M"/>
    <property type="match status" value="1"/>
</dbReference>
<dbReference type="Pfam" id="PF02776">
    <property type="entry name" value="TPP_enzyme_N"/>
    <property type="match status" value="1"/>
</dbReference>
<dbReference type="SUPFAM" id="SSF52467">
    <property type="entry name" value="DHS-like NAD/FAD-binding domain"/>
    <property type="match status" value="1"/>
</dbReference>
<dbReference type="SUPFAM" id="SSF52518">
    <property type="entry name" value="Thiamin diphosphate-binding fold (THDP-binding)"/>
    <property type="match status" value="2"/>
</dbReference>
<dbReference type="PROSITE" id="PS00187">
    <property type="entry name" value="TPP_ENZYMES"/>
    <property type="match status" value="1"/>
</dbReference>
<name>ILVB_SCHPO</name>
<evidence type="ECO:0000250" key="1"/>
<evidence type="ECO:0000255" key="2"/>
<evidence type="ECO:0000305" key="3"/>
<comment type="catalytic activity">
    <reaction>
        <text>2 pyruvate + H(+) = (2S)-2-acetolactate + CO2</text>
        <dbReference type="Rhea" id="RHEA:25249"/>
        <dbReference type="ChEBI" id="CHEBI:15361"/>
        <dbReference type="ChEBI" id="CHEBI:15378"/>
        <dbReference type="ChEBI" id="CHEBI:16526"/>
        <dbReference type="ChEBI" id="CHEBI:58476"/>
        <dbReference type="EC" id="2.2.1.6"/>
    </reaction>
</comment>
<comment type="cofactor">
    <cofactor evidence="1">
        <name>Mg(2+)</name>
        <dbReference type="ChEBI" id="CHEBI:18420"/>
    </cofactor>
    <text evidence="1">Binds 1 Mg(2+) ion per subunit.</text>
</comment>
<comment type="cofactor">
    <cofactor evidence="1">
        <name>thiamine diphosphate</name>
        <dbReference type="ChEBI" id="CHEBI:58937"/>
    </cofactor>
    <text evidence="1">Binds 1 thiamine pyrophosphate per subunit.</text>
</comment>
<comment type="pathway">
    <text>Amino-acid biosynthesis; L-isoleucine biosynthesis; L-isoleucine from 2-oxobutanoate: step 1/4.</text>
</comment>
<comment type="pathway">
    <text>Amino-acid biosynthesis; L-valine biosynthesis; L-valine from pyruvate: step 1/4.</text>
</comment>
<comment type="subcellular location">
    <subcellularLocation>
        <location>Mitochondrion</location>
    </subcellularLocation>
</comment>
<comment type="similarity">
    <text evidence="3">Belongs to the TPP enzyme family.</text>
</comment>
<gene>
    <name type="primary">ilv1</name>
    <name type="ORF">SPBP35G2.07</name>
</gene>